<organism>
    <name type="scientific">Rattus norvegicus</name>
    <name type="common">Rat</name>
    <dbReference type="NCBI Taxonomy" id="10116"/>
    <lineage>
        <taxon>Eukaryota</taxon>
        <taxon>Metazoa</taxon>
        <taxon>Chordata</taxon>
        <taxon>Craniata</taxon>
        <taxon>Vertebrata</taxon>
        <taxon>Euteleostomi</taxon>
        <taxon>Mammalia</taxon>
        <taxon>Eutheria</taxon>
        <taxon>Euarchontoglires</taxon>
        <taxon>Glires</taxon>
        <taxon>Rodentia</taxon>
        <taxon>Myomorpha</taxon>
        <taxon>Muroidea</taxon>
        <taxon>Muridae</taxon>
        <taxon>Murinae</taxon>
        <taxon>Rattus</taxon>
    </lineage>
</organism>
<accession>Q6AXT9</accession>
<protein>
    <recommendedName>
        <fullName>Outer dense fiber protein 4</fullName>
    </recommendedName>
    <alternativeName>
        <fullName>Outer dense fiber of sperm tails protein 4</fullName>
    </alternativeName>
</protein>
<keyword id="KW-0217">Developmental protein</keyword>
<keyword id="KW-0221">Differentiation</keyword>
<keyword id="KW-0472">Membrane</keyword>
<keyword id="KW-0597">Phosphoprotein</keyword>
<keyword id="KW-1185">Reference proteome</keyword>
<keyword id="KW-0744">Spermatogenesis</keyword>
<keyword id="KW-0812">Transmembrane</keyword>
<keyword id="KW-1133">Transmembrane helix</keyword>
<evidence type="ECO:0000250" key="1"/>
<evidence type="ECO:0000250" key="2">
    <source>
        <dbReference type="UniProtKB" id="Q8VI88"/>
    </source>
</evidence>
<evidence type="ECO:0000255" key="3"/>
<evidence type="ECO:0000256" key="4">
    <source>
        <dbReference type="SAM" id="MobiDB-lite"/>
    </source>
</evidence>
<evidence type="ECO:0000305" key="5"/>
<dbReference type="EMBL" id="BC079319">
    <property type="protein sequence ID" value="AAH79319.1"/>
    <property type="molecule type" value="mRNA"/>
</dbReference>
<dbReference type="RefSeq" id="NP_001007671.1">
    <property type="nucleotide sequence ID" value="NM_001007670.1"/>
</dbReference>
<dbReference type="FunCoup" id="Q6AXT9">
    <property type="interactions" value="11"/>
</dbReference>
<dbReference type="STRING" id="10116.ENSRNOP00000005667"/>
<dbReference type="PhosphoSitePlus" id="Q6AXT9"/>
<dbReference type="PaxDb" id="10116-ENSRNOP00000005667"/>
<dbReference type="GeneID" id="303236"/>
<dbReference type="KEGG" id="rno:303236"/>
<dbReference type="UCSC" id="RGD:1359332">
    <property type="organism name" value="rat"/>
</dbReference>
<dbReference type="AGR" id="RGD:1359332"/>
<dbReference type="CTD" id="146852"/>
<dbReference type="RGD" id="1359332">
    <property type="gene designation" value="Odf4"/>
</dbReference>
<dbReference type="VEuPathDB" id="HostDB:ENSRNOG00000004225"/>
<dbReference type="eggNOG" id="ENOG502SXVG">
    <property type="taxonomic scope" value="Eukaryota"/>
</dbReference>
<dbReference type="HOGENOM" id="CLU_062754_0_0_1"/>
<dbReference type="InParanoid" id="Q6AXT9"/>
<dbReference type="OrthoDB" id="9620006at2759"/>
<dbReference type="PhylomeDB" id="Q6AXT9"/>
<dbReference type="PRO" id="PR:Q6AXT9"/>
<dbReference type="Proteomes" id="UP000002494">
    <property type="component" value="Chromosome 10"/>
</dbReference>
<dbReference type="Bgee" id="ENSRNOG00000004225">
    <property type="expression patterns" value="Expressed in testis and 2 other cell types or tissues"/>
</dbReference>
<dbReference type="GO" id="GO:0031514">
    <property type="term" value="C:motile cilium"/>
    <property type="evidence" value="ECO:0000266"/>
    <property type="project" value="RGD"/>
</dbReference>
<dbReference type="GO" id="GO:0001520">
    <property type="term" value="C:outer dense fiber"/>
    <property type="evidence" value="ECO:0000266"/>
    <property type="project" value="RGD"/>
</dbReference>
<dbReference type="GO" id="GO:0005886">
    <property type="term" value="C:plasma membrane"/>
    <property type="evidence" value="ECO:0000318"/>
    <property type="project" value="GO_Central"/>
</dbReference>
<dbReference type="GO" id="GO:0030154">
    <property type="term" value="P:cell differentiation"/>
    <property type="evidence" value="ECO:0007669"/>
    <property type="project" value="UniProtKB-KW"/>
</dbReference>
<dbReference type="GO" id="GO:0007283">
    <property type="term" value="P:spermatogenesis"/>
    <property type="evidence" value="ECO:0007669"/>
    <property type="project" value="UniProtKB-KW"/>
</dbReference>
<dbReference type="FunFam" id="1.20.140.150:FF:000074">
    <property type="entry name" value="Outer dense fiber of sperm tails 4"/>
    <property type="match status" value="1"/>
</dbReference>
<dbReference type="Gene3D" id="1.20.140.150">
    <property type="match status" value="1"/>
</dbReference>
<dbReference type="InterPro" id="IPR050579">
    <property type="entry name" value="PMP-22/EMP/MP20-like"/>
</dbReference>
<dbReference type="InterPro" id="IPR004031">
    <property type="entry name" value="PMP22/EMP/MP20/Claudin"/>
</dbReference>
<dbReference type="PANTHER" id="PTHR10671">
    <property type="entry name" value="EPITHELIAL MEMBRANE PROTEIN-RELATED"/>
    <property type="match status" value="1"/>
</dbReference>
<dbReference type="PANTHER" id="PTHR10671:SF94">
    <property type="entry name" value="OUTER DENSE FIBER PROTEIN 4"/>
    <property type="match status" value="1"/>
</dbReference>
<dbReference type="Pfam" id="PF00822">
    <property type="entry name" value="PMP22_Claudin"/>
    <property type="match status" value="1"/>
</dbReference>
<reference key="1">
    <citation type="journal article" date="2004" name="Genome Res.">
        <title>The status, quality, and expansion of the NIH full-length cDNA project: the Mammalian Gene Collection (MGC).</title>
        <authorList>
            <consortium name="The MGC Project Team"/>
        </authorList>
    </citation>
    <scope>NUCLEOTIDE SEQUENCE [LARGE SCALE MRNA]</scope>
    <source>
        <tissue>Testis</tissue>
    </source>
</reference>
<gene>
    <name type="primary">Odf4</name>
</gene>
<sequence length="290" mass="33146">MESDLTVEESETIKTRSRRPLTEHRRHSLLPLQWKLAHSSRWMAQVVASEFSLLAFLLLLLMVFSKKWLYPSKSRFHQRYPQNITKRVYTSIHSMSTGLLYICISKSCLSSDNEEDNFKMWTIHPAFGVAKISFILAVGLGFVLTVWLHLPYLPCLQRMPFFGLIGIILSFCEVTLIFLTLLLFPVNLWIYELKKNISVPIGWSYFIGWLVLILYLTCGILCYLNHKNFWSLIMSSSSINATCSSSVPVSLMNTSQISKSQADILDPTQDDQKPLSSDNIALPPNPDTTD</sequence>
<feature type="chain" id="PRO_0000304724" description="Outer dense fiber protein 4">
    <location>
        <begin position="1"/>
        <end position="290"/>
    </location>
</feature>
<feature type="transmembrane region" description="Helical" evidence="3">
    <location>
        <begin position="44"/>
        <end position="64"/>
    </location>
</feature>
<feature type="transmembrane region" description="Helical" evidence="3">
    <location>
        <begin position="132"/>
        <end position="152"/>
    </location>
</feature>
<feature type="transmembrane region" description="Helical" evidence="3">
    <location>
        <begin position="164"/>
        <end position="184"/>
    </location>
</feature>
<feature type="transmembrane region" description="Helical" evidence="3">
    <location>
        <begin position="201"/>
        <end position="221"/>
    </location>
</feature>
<feature type="region of interest" description="Disordered" evidence="4">
    <location>
        <begin position="262"/>
        <end position="290"/>
    </location>
</feature>
<feature type="modified residue" description="Phosphoserine" evidence="2">
    <location>
        <position position="28"/>
    </location>
</feature>
<comment type="function">
    <text evidence="1">Component of the outer dense fibers (ODF) of spermatozoa which could be involved in sperm tail structure, sperm movement and general organization of cellular cytoskeleton.</text>
</comment>
<comment type="subcellular location">
    <subcellularLocation>
        <location evidence="5">Membrane</location>
        <topology evidence="5">Multi-pass membrane protein</topology>
    </subcellularLocation>
</comment>
<name>ODFP4_RAT</name>
<proteinExistence type="evidence at transcript level"/>